<sequence length="441" mass="49206">MTGSLWLSLALSLAVLAQFKVSAAPNLVCFYDSQGSQRQGLAQFSMIDIELALQFCTHLVYGYAGVNADNYEMQSINKRLDLEQRHLAQITSMKERYPHIKFLLSVGGDADTNEGNQYIKLLESGQQGHRRFIESARDLVRRYNFDGLDLALQLPRNKPRKVHGDVGSAWKSFKKFFTGDFIVDTESETHKGQVTALIKDLSAALKQNDLLLSLTVLPNVNSSWYYDAPSIAPSLDFINLGTFDFLTPQRNPEEADFSAPTYEAVGQNRLGHYNLNFQMEHWLLQRVPANKINIGIATYGRSWKMSKDSGDSGMPVVPSTQGPAPAGPQSKQEGLLNWAEICSLMPNPSNSNARGPNAPVKRVVDPTKRYGSYAFRAADENGDHGLWISYDDPDSASSKAMYARARNLGGVALFDLTQDDFRGQCTNDRFPMLRAIKYRLL</sequence>
<reference key="1">
    <citation type="journal article" date="1999" name="Development">
        <title>A new family of growth factors produced by the fat body and active on Drosophila imaginal disc cells.</title>
        <authorList>
            <person name="Kawamura K."/>
            <person name="Shibata T."/>
            <person name="Saget O."/>
            <person name="Peel D."/>
            <person name="Bryant P.J."/>
        </authorList>
    </citation>
    <scope>NUCLEOTIDE SEQUENCE [MRNA]</scope>
    <scope>PROTEIN SEQUENCE OF 24-55</scope>
    <scope>VARIANT THR-351</scope>
    <scope>FUNCTION</scope>
    <scope>SUBCELLULAR LOCATION</scope>
    <scope>TISSUE SPECIFICITY</scope>
    <scope>DEVELOPMENTAL STAGE</scope>
    <source>
        <tissue>Imaginal disk</tissue>
    </source>
</reference>
<reference key="2">
    <citation type="journal article" date="2002" name="Genetics">
        <title>Polymorphism patterns in two tightly linked developmental genes, Idgf1 and Idgf3, of Drosophila melanogaster.</title>
        <authorList>
            <person name="Zurovcova M."/>
            <person name="Ayala F.J."/>
        </authorList>
    </citation>
    <scope>NUCLEOTIDE SEQUENCE [GENOMIC DNA]</scope>
    <scope>VARIANTS VAL-14; ILE-46; ASN-47; PHE-139; MET-183; HIS-250; THR-349; THR-351 AND CYS-434</scope>
    <source>
        <strain>MB01a</strain>
        <strain>MB08b</strain>
        <strain>MB13a</strain>
        <strain>MB15b</strain>
        <strain>MB25a</strain>
        <strain>MB29b</strain>
        <strain>MB33a</strain>
        <strain>MB34a</strain>
        <strain>MB36a</strain>
        <strain>MB37a</strain>
        <strain>MB39b</strain>
        <strain>MB40b</strain>
        <strain>MB45b</strain>
        <strain>MB46b</strain>
        <strain>MB47a</strain>
        <strain>MB48b</strain>
        <strain>MB52b</strain>
        <strain>MB58b</strain>
        <strain>MB63a</strain>
        <strain>MB80b</strain>
    </source>
</reference>
<reference key="3">
    <citation type="journal article" date="1999" name="Genetics">
        <title>An exploration of the sequence of a 2.9-Mb region of the genome of Drosophila melanogaster: the Adh region.</title>
        <authorList>
            <person name="Ashburner M."/>
            <person name="Misra S."/>
            <person name="Roote J."/>
            <person name="Lewis S.E."/>
            <person name="Blazej R.G."/>
            <person name="Davis T."/>
            <person name="Doyle C."/>
            <person name="Galle R.F."/>
            <person name="George R.A."/>
            <person name="Harris N.L."/>
            <person name="Hartzell G."/>
            <person name="Harvey D.A."/>
            <person name="Hong L."/>
            <person name="Houston K.A."/>
            <person name="Hoskins R.A."/>
            <person name="Johnson G."/>
            <person name="Martin C."/>
            <person name="Moshrefi A.R."/>
            <person name="Palazzolo M."/>
            <person name="Reese M.G."/>
            <person name="Spradling A.C."/>
            <person name="Tsang G."/>
            <person name="Wan K.H."/>
            <person name="Whitelaw K."/>
            <person name="Celniker S.E."/>
            <person name="Rubin G.M."/>
        </authorList>
    </citation>
    <scope>NUCLEOTIDE SEQUENCE [LARGE SCALE GENOMIC DNA]</scope>
    <scope>VARIANT TYR-113</scope>
    <source>
        <strain>Berkeley</strain>
    </source>
</reference>
<reference key="4">
    <citation type="journal article" date="2000" name="Science">
        <title>The genome sequence of Drosophila melanogaster.</title>
        <authorList>
            <person name="Adams M.D."/>
            <person name="Celniker S.E."/>
            <person name="Holt R.A."/>
            <person name="Evans C.A."/>
            <person name="Gocayne J.D."/>
            <person name="Amanatides P.G."/>
            <person name="Scherer S.E."/>
            <person name="Li P.W."/>
            <person name="Hoskins R.A."/>
            <person name="Galle R.F."/>
            <person name="George R.A."/>
            <person name="Lewis S.E."/>
            <person name="Richards S."/>
            <person name="Ashburner M."/>
            <person name="Henderson S.N."/>
            <person name="Sutton G.G."/>
            <person name="Wortman J.R."/>
            <person name="Yandell M.D."/>
            <person name="Zhang Q."/>
            <person name="Chen L.X."/>
            <person name="Brandon R.C."/>
            <person name="Rogers Y.-H.C."/>
            <person name="Blazej R.G."/>
            <person name="Champe M."/>
            <person name="Pfeiffer B.D."/>
            <person name="Wan K.H."/>
            <person name="Doyle C."/>
            <person name="Baxter E.G."/>
            <person name="Helt G."/>
            <person name="Nelson C.R."/>
            <person name="Miklos G.L.G."/>
            <person name="Abril J.F."/>
            <person name="Agbayani A."/>
            <person name="An H.-J."/>
            <person name="Andrews-Pfannkoch C."/>
            <person name="Baldwin D."/>
            <person name="Ballew R.M."/>
            <person name="Basu A."/>
            <person name="Baxendale J."/>
            <person name="Bayraktaroglu L."/>
            <person name="Beasley E.M."/>
            <person name="Beeson K.Y."/>
            <person name="Benos P.V."/>
            <person name="Berman B.P."/>
            <person name="Bhandari D."/>
            <person name="Bolshakov S."/>
            <person name="Borkova D."/>
            <person name="Botchan M.R."/>
            <person name="Bouck J."/>
            <person name="Brokstein P."/>
            <person name="Brottier P."/>
            <person name="Burtis K.C."/>
            <person name="Busam D.A."/>
            <person name="Butler H."/>
            <person name="Cadieu E."/>
            <person name="Center A."/>
            <person name="Chandra I."/>
            <person name="Cherry J.M."/>
            <person name="Cawley S."/>
            <person name="Dahlke C."/>
            <person name="Davenport L.B."/>
            <person name="Davies P."/>
            <person name="de Pablos B."/>
            <person name="Delcher A."/>
            <person name="Deng Z."/>
            <person name="Mays A.D."/>
            <person name="Dew I."/>
            <person name="Dietz S.M."/>
            <person name="Dodson K."/>
            <person name="Doup L.E."/>
            <person name="Downes M."/>
            <person name="Dugan-Rocha S."/>
            <person name="Dunkov B.C."/>
            <person name="Dunn P."/>
            <person name="Durbin K.J."/>
            <person name="Evangelista C.C."/>
            <person name="Ferraz C."/>
            <person name="Ferriera S."/>
            <person name="Fleischmann W."/>
            <person name="Fosler C."/>
            <person name="Gabrielian A.E."/>
            <person name="Garg N.S."/>
            <person name="Gelbart W.M."/>
            <person name="Glasser K."/>
            <person name="Glodek A."/>
            <person name="Gong F."/>
            <person name="Gorrell J.H."/>
            <person name="Gu Z."/>
            <person name="Guan P."/>
            <person name="Harris M."/>
            <person name="Harris N.L."/>
            <person name="Harvey D.A."/>
            <person name="Heiman T.J."/>
            <person name="Hernandez J.R."/>
            <person name="Houck J."/>
            <person name="Hostin D."/>
            <person name="Houston K.A."/>
            <person name="Howland T.J."/>
            <person name="Wei M.-H."/>
            <person name="Ibegwam C."/>
            <person name="Jalali M."/>
            <person name="Kalush F."/>
            <person name="Karpen G.H."/>
            <person name="Ke Z."/>
            <person name="Kennison J.A."/>
            <person name="Ketchum K.A."/>
            <person name="Kimmel B.E."/>
            <person name="Kodira C.D."/>
            <person name="Kraft C.L."/>
            <person name="Kravitz S."/>
            <person name="Kulp D."/>
            <person name="Lai Z."/>
            <person name="Lasko P."/>
            <person name="Lei Y."/>
            <person name="Levitsky A.A."/>
            <person name="Li J.H."/>
            <person name="Li Z."/>
            <person name="Liang Y."/>
            <person name="Lin X."/>
            <person name="Liu X."/>
            <person name="Mattei B."/>
            <person name="McIntosh T.C."/>
            <person name="McLeod M.P."/>
            <person name="McPherson D."/>
            <person name="Merkulov G."/>
            <person name="Milshina N.V."/>
            <person name="Mobarry C."/>
            <person name="Morris J."/>
            <person name="Moshrefi A."/>
            <person name="Mount S.M."/>
            <person name="Moy M."/>
            <person name="Murphy B."/>
            <person name="Murphy L."/>
            <person name="Muzny D.M."/>
            <person name="Nelson D.L."/>
            <person name="Nelson D.R."/>
            <person name="Nelson K.A."/>
            <person name="Nixon K."/>
            <person name="Nusskern D.R."/>
            <person name="Pacleb J.M."/>
            <person name="Palazzolo M."/>
            <person name="Pittman G.S."/>
            <person name="Pan S."/>
            <person name="Pollard J."/>
            <person name="Puri V."/>
            <person name="Reese M.G."/>
            <person name="Reinert K."/>
            <person name="Remington K."/>
            <person name="Saunders R.D.C."/>
            <person name="Scheeler F."/>
            <person name="Shen H."/>
            <person name="Shue B.C."/>
            <person name="Siden-Kiamos I."/>
            <person name="Simpson M."/>
            <person name="Skupski M.P."/>
            <person name="Smith T.J."/>
            <person name="Spier E."/>
            <person name="Spradling A.C."/>
            <person name="Stapleton M."/>
            <person name="Strong R."/>
            <person name="Sun E."/>
            <person name="Svirskas R."/>
            <person name="Tector C."/>
            <person name="Turner R."/>
            <person name="Venter E."/>
            <person name="Wang A.H."/>
            <person name="Wang X."/>
            <person name="Wang Z.-Y."/>
            <person name="Wassarman D.A."/>
            <person name="Weinstock G.M."/>
            <person name="Weissenbach J."/>
            <person name="Williams S.M."/>
            <person name="Woodage T."/>
            <person name="Worley K.C."/>
            <person name="Wu D."/>
            <person name="Yang S."/>
            <person name="Yao Q.A."/>
            <person name="Ye J."/>
            <person name="Yeh R.-F."/>
            <person name="Zaveri J.S."/>
            <person name="Zhan M."/>
            <person name="Zhang G."/>
            <person name="Zhao Q."/>
            <person name="Zheng L."/>
            <person name="Zheng X.H."/>
            <person name="Zhong F.N."/>
            <person name="Zhong W."/>
            <person name="Zhou X."/>
            <person name="Zhu S.C."/>
            <person name="Zhu X."/>
            <person name="Smith H.O."/>
            <person name="Gibbs R.A."/>
            <person name="Myers E.W."/>
            <person name="Rubin G.M."/>
            <person name="Venter J.C."/>
        </authorList>
    </citation>
    <scope>NUCLEOTIDE SEQUENCE [LARGE SCALE GENOMIC DNA]</scope>
    <scope>VARIANT TYR-113</scope>
    <source>
        <strain>Berkeley</strain>
    </source>
</reference>
<reference key="5">
    <citation type="journal article" date="2002" name="Genome Biol.">
        <title>Annotation of the Drosophila melanogaster euchromatic genome: a systematic review.</title>
        <authorList>
            <person name="Misra S."/>
            <person name="Crosby M.A."/>
            <person name="Mungall C.J."/>
            <person name="Matthews B.B."/>
            <person name="Campbell K.S."/>
            <person name="Hradecky P."/>
            <person name="Huang Y."/>
            <person name="Kaminker J.S."/>
            <person name="Millburn G.H."/>
            <person name="Prochnik S.E."/>
            <person name="Smith C.D."/>
            <person name="Tupy J.L."/>
            <person name="Whitfield E.J."/>
            <person name="Bayraktaroglu L."/>
            <person name="Berman B.P."/>
            <person name="Bettencourt B.R."/>
            <person name="Celniker S.E."/>
            <person name="de Grey A.D.N.J."/>
            <person name="Drysdale R.A."/>
            <person name="Harris N.L."/>
            <person name="Richter J."/>
            <person name="Russo S."/>
            <person name="Schroeder A.J."/>
            <person name="Shu S.Q."/>
            <person name="Stapleton M."/>
            <person name="Yamada C."/>
            <person name="Ashburner M."/>
            <person name="Gelbart W.M."/>
            <person name="Rubin G.M."/>
            <person name="Lewis S.E."/>
        </authorList>
    </citation>
    <scope>GENOME REANNOTATION</scope>
    <source>
        <strain>Berkeley</strain>
    </source>
</reference>
<reference key="6">
    <citation type="journal article" date="2002" name="Genome Biol.">
        <title>A Drosophila full-length cDNA resource.</title>
        <authorList>
            <person name="Stapleton M."/>
            <person name="Carlson J.W."/>
            <person name="Brokstein P."/>
            <person name="Yu C."/>
            <person name="Champe M."/>
            <person name="George R.A."/>
            <person name="Guarin H."/>
            <person name="Kronmiller B."/>
            <person name="Pacleb J.M."/>
            <person name="Park S."/>
            <person name="Wan K.H."/>
            <person name="Rubin G.M."/>
            <person name="Celniker S.E."/>
        </authorList>
    </citation>
    <scope>NUCLEOTIDE SEQUENCE [LARGE SCALE MRNA]</scope>
    <scope>VARIANT TYR-113</scope>
    <source>
        <strain>Berkeley</strain>
        <tissue>Head</tissue>
    </source>
</reference>
<dbReference type="EMBL" id="AF102238">
    <property type="protein sequence ID" value="AAC99419.1"/>
    <property type="molecule type" value="mRNA"/>
</dbReference>
<dbReference type="EMBL" id="AF394713">
    <property type="protein sequence ID" value="AAM69645.1"/>
    <property type="molecule type" value="Genomic_DNA"/>
</dbReference>
<dbReference type="EMBL" id="AF394714">
    <property type="protein sequence ID" value="AAM69646.1"/>
    <property type="molecule type" value="Genomic_DNA"/>
</dbReference>
<dbReference type="EMBL" id="AF394715">
    <property type="protein sequence ID" value="AAM69647.1"/>
    <property type="molecule type" value="Genomic_DNA"/>
</dbReference>
<dbReference type="EMBL" id="AF394716">
    <property type="protein sequence ID" value="AAM69648.1"/>
    <property type="molecule type" value="Genomic_DNA"/>
</dbReference>
<dbReference type="EMBL" id="AF394717">
    <property type="protein sequence ID" value="AAM69649.1"/>
    <property type="molecule type" value="Genomic_DNA"/>
</dbReference>
<dbReference type="EMBL" id="AF394718">
    <property type="protein sequence ID" value="AAM69650.1"/>
    <property type="molecule type" value="Genomic_DNA"/>
</dbReference>
<dbReference type="EMBL" id="AF394719">
    <property type="protein sequence ID" value="AAM69651.1"/>
    <property type="molecule type" value="Genomic_DNA"/>
</dbReference>
<dbReference type="EMBL" id="AF394720">
    <property type="protein sequence ID" value="AAM69652.1"/>
    <property type="molecule type" value="Genomic_DNA"/>
</dbReference>
<dbReference type="EMBL" id="AF394721">
    <property type="protein sequence ID" value="AAM69653.1"/>
    <property type="molecule type" value="Genomic_DNA"/>
</dbReference>
<dbReference type="EMBL" id="AF394722">
    <property type="protein sequence ID" value="AAM69654.1"/>
    <property type="molecule type" value="Genomic_DNA"/>
</dbReference>
<dbReference type="EMBL" id="AF394723">
    <property type="protein sequence ID" value="AAM69655.1"/>
    <property type="molecule type" value="Genomic_DNA"/>
</dbReference>
<dbReference type="EMBL" id="AF394724">
    <property type="protein sequence ID" value="AAM69656.1"/>
    <property type="molecule type" value="Genomic_DNA"/>
</dbReference>
<dbReference type="EMBL" id="AF394725">
    <property type="protein sequence ID" value="AAM69657.1"/>
    <property type="molecule type" value="Genomic_DNA"/>
</dbReference>
<dbReference type="EMBL" id="AF394726">
    <property type="protein sequence ID" value="AAM69658.1"/>
    <property type="molecule type" value="Genomic_DNA"/>
</dbReference>
<dbReference type="EMBL" id="AF394727">
    <property type="protein sequence ID" value="AAM69659.1"/>
    <property type="molecule type" value="Genomic_DNA"/>
</dbReference>
<dbReference type="EMBL" id="AF394728">
    <property type="protein sequence ID" value="AAM69660.1"/>
    <property type="molecule type" value="Genomic_DNA"/>
</dbReference>
<dbReference type="EMBL" id="AF394729">
    <property type="protein sequence ID" value="AAM69661.1"/>
    <property type="molecule type" value="Genomic_DNA"/>
</dbReference>
<dbReference type="EMBL" id="AF394730">
    <property type="protein sequence ID" value="AAM69662.1"/>
    <property type="molecule type" value="Genomic_DNA"/>
</dbReference>
<dbReference type="EMBL" id="AF394731">
    <property type="protein sequence ID" value="AAM69663.1"/>
    <property type="molecule type" value="Genomic_DNA"/>
</dbReference>
<dbReference type="EMBL" id="AF394732">
    <property type="protein sequence ID" value="AAM69664.1"/>
    <property type="molecule type" value="Genomic_DNA"/>
</dbReference>
<dbReference type="EMBL" id="AE014134">
    <property type="protein sequence ID" value="AAF53537.1"/>
    <property type="molecule type" value="Genomic_DNA"/>
</dbReference>
<dbReference type="EMBL" id="AE014134">
    <property type="protein sequence ID" value="AAN10940.1"/>
    <property type="molecule type" value="Genomic_DNA"/>
</dbReference>
<dbReference type="EMBL" id="AE014134">
    <property type="protein sequence ID" value="AAN10941.1"/>
    <property type="molecule type" value="Genomic_DNA"/>
</dbReference>
<dbReference type="EMBL" id="AY047561">
    <property type="protein sequence ID" value="AAK77293.1"/>
    <property type="molecule type" value="mRNA"/>
</dbReference>
<dbReference type="RefSeq" id="NP_001285982.1">
    <property type="nucleotide sequence ID" value="NM_001299053.1"/>
</dbReference>
<dbReference type="RefSeq" id="NP_477256.1">
    <property type="nucleotide sequence ID" value="NM_057908.4"/>
</dbReference>
<dbReference type="RefSeq" id="NP_723966.1">
    <property type="nucleotide sequence ID" value="NM_165157.2"/>
</dbReference>
<dbReference type="RefSeq" id="NP_723967.1">
    <property type="nucleotide sequence ID" value="NM_165158.1"/>
</dbReference>
<dbReference type="SMR" id="Q8MLZ7"/>
<dbReference type="IntAct" id="Q8MLZ7">
    <property type="interactions" value="1"/>
</dbReference>
<dbReference type="STRING" id="7227.FBpp0309719"/>
<dbReference type="CAZy" id="GH18">
    <property type="family name" value="Glycoside Hydrolase Family 18"/>
</dbReference>
<dbReference type="GlyCosmos" id="Q8MLZ7">
    <property type="glycosylation" value="1 site, No reported glycans"/>
</dbReference>
<dbReference type="GlyGen" id="Q8MLZ7">
    <property type="glycosylation" value="1 site"/>
</dbReference>
<dbReference type="PaxDb" id="7227-FBpp0080419"/>
<dbReference type="DNASU" id="34981"/>
<dbReference type="GeneID" id="34981"/>
<dbReference type="KEGG" id="dme:Dmel_CG4559"/>
<dbReference type="UCSC" id="CG4559-RB">
    <property type="organism name" value="d. melanogaster"/>
</dbReference>
<dbReference type="AGR" id="FB:FBgn0020414"/>
<dbReference type="CTD" id="34981"/>
<dbReference type="FlyBase" id="FBgn0020414">
    <property type="gene designation" value="Idgf3"/>
</dbReference>
<dbReference type="VEuPathDB" id="VectorBase:FBgn0020414"/>
<dbReference type="eggNOG" id="KOG2806">
    <property type="taxonomic scope" value="Eukaryota"/>
</dbReference>
<dbReference type="HOGENOM" id="CLU_002833_3_2_1"/>
<dbReference type="InParanoid" id="Q8MLZ7"/>
<dbReference type="OrthoDB" id="76388at2759"/>
<dbReference type="PhylomeDB" id="Q8MLZ7"/>
<dbReference type="Reactome" id="R-DME-6798695">
    <property type="pathway name" value="Neutrophil degranulation"/>
</dbReference>
<dbReference type="BioGRID-ORCS" id="34981">
    <property type="hits" value="0 hits in 1 CRISPR screen"/>
</dbReference>
<dbReference type="GenomeRNAi" id="34981"/>
<dbReference type="PRO" id="PR:Q8MLZ7"/>
<dbReference type="Proteomes" id="UP000000803">
    <property type="component" value="Chromosome 2L"/>
</dbReference>
<dbReference type="ExpressionAtlas" id="Q8MLZ7">
    <property type="expression patterns" value="baseline and differential"/>
</dbReference>
<dbReference type="GO" id="GO:0005576">
    <property type="term" value="C:extracellular region"/>
    <property type="evidence" value="ECO:0007005"/>
    <property type="project" value="FlyBase"/>
</dbReference>
<dbReference type="GO" id="GO:0008061">
    <property type="term" value="F:chitin binding"/>
    <property type="evidence" value="ECO:0007669"/>
    <property type="project" value="InterPro"/>
</dbReference>
<dbReference type="GO" id="GO:0008084">
    <property type="term" value="F:imaginal disc growth factor receptor binding"/>
    <property type="evidence" value="ECO:0000314"/>
    <property type="project" value="UniProtKB"/>
</dbReference>
<dbReference type="GO" id="GO:0005975">
    <property type="term" value="P:carbohydrate metabolic process"/>
    <property type="evidence" value="ECO:0007669"/>
    <property type="project" value="InterPro"/>
</dbReference>
<dbReference type="GO" id="GO:0006032">
    <property type="term" value="P:chitin catabolic process"/>
    <property type="evidence" value="ECO:0000318"/>
    <property type="project" value="GO_Central"/>
</dbReference>
<dbReference type="GO" id="GO:0040003">
    <property type="term" value="P:chitin-based cuticle development"/>
    <property type="evidence" value="ECO:0000315"/>
    <property type="project" value="FlyBase"/>
</dbReference>
<dbReference type="GO" id="GO:0018990">
    <property type="term" value="P:ecdysis, chitin-based cuticle"/>
    <property type="evidence" value="ECO:0000315"/>
    <property type="project" value="FlyBase"/>
</dbReference>
<dbReference type="GO" id="GO:0007444">
    <property type="term" value="P:imaginal disc development"/>
    <property type="evidence" value="ECO:0000314"/>
    <property type="project" value="UniProtKB"/>
</dbReference>
<dbReference type="GO" id="GO:0032882">
    <property type="term" value="P:regulation of chitin metabolic process"/>
    <property type="evidence" value="ECO:0000315"/>
    <property type="project" value="FlyBase"/>
</dbReference>
<dbReference type="GO" id="GO:0042060">
    <property type="term" value="P:wound healing"/>
    <property type="evidence" value="ECO:0000315"/>
    <property type="project" value="FlyBase"/>
</dbReference>
<dbReference type="CDD" id="cd02873">
    <property type="entry name" value="GH18_IDGF"/>
    <property type="match status" value="1"/>
</dbReference>
<dbReference type="FunFam" id="3.10.50.10:FF:000007">
    <property type="entry name" value="chitinase-like protein Idgf4"/>
    <property type="match status" value="1"/>
</dbReference>
<dbReference type="FunFam" id="3.20.20.80:FF:000071">
    <property type="entry name" value="Imaginal disc growth factor"/>
    <property type="match status" value="1"/>
</dbReference>
<dbReference type="Gene3D" id="3.10.50.10">
    <property type="match status" value="1"/>
</dbReference>
<dbReference type="Gene3D" id="3.20.20.80">
    <property type="entry name" value="Glycosidases"/>
    <property type="match status" value="1"/>
</dbReference>
<dbReference type="InterPro" id="IPR011583">
    <property type="entry name" value="Chitinase_II/V-like_cat"/>
</dbReference>
<dbReference type="InterPro" id="IPR029070">
    <property type="entry name" value="Chitinase_insertion_sf"/>
</dbReference>
<dbReference type="InterPro" id="IPR001223">
    <property type="entry name" value="Glyco_hydro18_cat"/>
</dbReference>
<dbReference type="InterPro" id="IPR017853">
    <property type="entry name" value="Glycoside_hydrolase_SF"/>
</dbReference>
<dbReference type="InterPro" id="IPR050314">
    <property type="entry name" value="Glycosyl_Hydrlase_18"/>
</dbReference>
<dbReference type="InterPro" id="IPR015520">
    <property type="entry name" value="IDGF"/>
</dbReference>
<dbReference type="PANTHER" id="PTHR11177">
    <property type="entry name" value="CHITINASE"/>
    <property type="match status" value="1"/>
</dbReference>
<dbReference type="PANTHER" id="PTHR11177:SF235">
    <property type="entry name" value="CHITINASE-LIKE PROTEIN IDGF1-RELATED"/>
    <property type="match status" value="1"/>
</dbReference>
<dbReference type="Pfam" id="PF00704">
    <property type="entry name" value="Glyco_hydro_18"/>
    <property type="match status" value="1"/>
</dbReference>
<dbReference type="SMART" id="SM00636">
    <property type="entry name" value="Glyco_18"/>
    <property type="match status" value="1"/>
</dbReference>
<dbReference type="SUPFAM" id="SSF51445">
    <property type="entry name" value="(Trans)glycosidases"/>
    <property type="match status" value="1"/>
</dbReference>
<dbReference type="SUPFAM" id="SSF54556">
    <property type="entry name" value="Chitinase insertion domain"/>
    <property type="match status" value="1"/>
</dbReference>
<dbReference type="PROSITE" id="PS51910">
    <property type="entry name" value="GH18_2"/>
    <property type="match status" value="1"/>
</dbReference>
<name>IDGF3_DROME</name>
<feature type="signal peptide" evidence="8">
    <location>
        <begin position="1"/>
        <end position="23"/>
    </location>
</feature>
<feature type="chain" id="PRO_0000011984" description="Chitinase-like protein Idgf3">
    <location>
        <begin position="24"/>
        <end position="441"/>
    </location>
</feature>
<feature type="domain" description="GH18" evidence="2">
    <location>
        <begin position="25"/>
        <end position="441"/>
    </location>
</feature>
<feature type="region of interest" description="Disordered" evidence="3">
    <location>
        <begin position="307"/>
        <end position="331"/>
    </location>
</feature>
<feature type="glycosylation site" description="N-linked (GlcNAc...) asparagine" evidence="1">
    <location>
        <position position="221"/>
    </location>
</feature>
<feature type="disulfide bond" evidence="2">
    <location>
        <begin position="29"/>
        <end position="56"/>
    </location>
</feature>
<feature type="disulfide bond" evidence="1">
    <location>
        <begin position="342"/>
        <end position="425"/>
    </location>
</feature>
<feature type="sequence variant" description="In strain: MB01a, MB13a, MB15b and MB46b." evidence="6">
    <original>A</original>
    <variation>V</variation>
    <location>
        <position position="14"/>
    </location>
</feature>
<feature type="sequence variant" description="In strain: MB25a." evidence="6">
    <original>M</original>
    <variation>I</variation>
    <location>
        <position position="46"/>
    </location>
</feature>
<feature type="sequence variant" description="In strain: MB25a." evidence="6">
    <original>I</original>
    <variation>N</variation>
    <location>
        <position position="47"/>
    </location>
</feature>
<feature type="sequence variant" description="In strain: Berkeley." evidence="4 5 7">
    <original>N</original>
    <variation>Y</variation>
    <location>
        <position position="113"/>
    </location>
</feature>
<feature type="sequence variant" description="In strain: MB29b." evidence="6">
    <original>L</original>
    <variation>F</variation>
    <location>
        <position position="139"/>
    </location>
</feature>
<feature type="sequence variant" description="In strain: MB47a." evidence="6">
    <original>V</original>
    <variation>M</variation>
    <location>
        <position position="183"/>
    </location>
</feature>
<feature type="sequence variant" description="In strain: MB33a and MB36a." evidence="6">
    <original>R</original>
    <variation>H</variation>
    <location>
        <position position="250"/>
    </location>
</feature>
<feature type="sequence variant" description="In strain: MB36a." evidence="6">
    <original>S</original>
    <variation>T</variation>
    <location>
        <position position="349"/>
    </location>
</feature>
<feature type="sequence variant" description="In strain: MB34a, MB36a, MB45b, MB46b, MB47a and MB58b." evidence="6 8">
    <original>S</original>
    <variation>T</variation>
    <location>
        <position position="351"/>
    </location>
</feature>
<feature type="sequence variant" description="In strain: MB37a." evidence="6">
    <original>R</original>
    <variation>C</variation>
    <location>
        <position position="434"/>
    </location>
</feature>
<comment type="function">
    <text evidence="8">Cooperates with insulin-like peptides to stimulate the proliferation, polarization and motility of imaginal disk cells. May act by stabilizing the binding of insulin-like peptides to its receptor through a simultaneous interaction with both molecules to form a multiprotein signaling complex.</text>
</comment>
<comment type="subcellular location">
    <subcellularLocation>
        <location evidence="8">Secreted</location>
    </subcellularLocation>
    <text>Secreted in hemolymph. It is probably transported to target tissues via hemolymph.</text>
</comment>
<comment type="tissue specificity">
    <text evidence="8">Primarily expressed in yolk cells and fat body. In larvae, it is expressed in small and large salivary gland cells, and weakly expressed in imaginal disks. Less expressed than Idgf2 and Idgf4.</text>
</comment>
<comment type="developmental stage">
    <text evidence="8">Expressed both maternally and zygotically. Expressed throughout development, with a much stronger expression during larval stages.</text>
</comment>
<comment type="PTM">
    <text evidence="1">Glycosylated.</text>
</comment>
<comment type="miscellaneous">
    <text>Lacks the typical Glu active site in position 153 that is replaced by a Gln residue, preventing the hydrolase activity. Its precise function remains unclear.</text>
</comment>
<comment type="similarity">
    <text evidence="9">Belongs to the glycosyl hydrolase 18 family. IDGF subfamily.</text>
</comment>
<accession>Q8MLZ7</accession>
<accession>A4V0S4</accession>
<accession>O96666</accession>
<accession>Q8MM23</accession>
<accession>Q8MX33</accession>
<accession>Q8MX34</accession>
<accession>Q8MX35</accession>
<accession>Q8MX36</accession>
<accession>Q8MX37</accession>
<accession>Q8MX38</accession>
<accession>Q8MX39</accession>
<accession>Q9V3B9</accession>
<evidence type="ECO:0000250" key="1"/>
<evidence type="ECO:0000255" key="2">
    <source>
        <dbReference type="PROSITE-ProRule" id="PRU01258"/>
    </source>
</evidence>
<evidence type="ECO:0000256" key="3">
    <source>
        <dbReference type="SAM" id="MobiDB-lite"/>
    </source>
</evidence>
<evidence type="ECO:0000269" key="4">
    <source>
    </source>
</evidence>
<evidence type="ECO:0000269" key="5">
    <source>
    </source>
</evidence>
<evidence type="ECO:0000269" key="6">
    <source>
    </source>
</evidence>
<evidence type="ECO:0000269" key="7">
    <source>
    </source>
</evidence>
<evidence type="ECO:0000269" key="8">
    <source>
    </source>
</evidence>
<evidence type="ECO:0000305" key="9"/>
<keyword id="KW-0217">Developmental protein</keyword>
<keyword id="KW-0903">Direct protein sequencing</keyword>
<keyword id="KW-1015">Disulfide bond</keyword>
<keyword id="KW-0325">Glycoprotein</keyword>
<keyword id="KW-1185">Reference proteome</keyword>
<keyword id="KW-0964">Secreted</keyword>
<keyword id="KW-0732">Signal</keyword>
<protein>
    <recommendedName>
        <fullName>Chitinase-like protein Idgf3</fullName>
    </recommendedName>
    <alternativeName>
        <fullName>Imaginal disk growth factor protein 3</fullName>
    </alternativeName>
</protein>
<gene>
    <name type="primary">Idgf3</name>
    <name type="ORF">CG4559</name>
</gene>
<organism>
    <name type="scientific">Drosophila melanogaster</name>
    <name type="common">Fruit fly</name>
    <dbReference type="NCBI Taxonomy" id="7227"/>
    <lineage>
        <taxon>Eukaryota</taxon>
        <taxon>Metazoa</taxon>
        <taxon>Ecdysozoa</taxon>
        <taxon>Arthropoda</taxon>
        <taxon>Hexapoda</taxon>
        <taxon>Insecta</taxon>
        <taxon>Pterygota</taxon>
        <taxon>Neoptera</taxon>
        <taxon>Endopterygota</taxon>
        <taxon>Diptera</taxon>
        <taxon>Brachycera</taxon>
        <taxon>Muscomorpha</taxon>
        <taxon>Ephydroidea</taxon>
        <taxon>Drosophilidae</taxon>
        <taxon>Drosophila</taxon>
        <taxon>Sophophora</taxon>
    </lineage>
</organism>
<proteinExistence type="evidence at protein level"/>